<sequence length="35" mass="3787">MIEPLLCGIVLGLIPVTLTGLFVAAWNQYRRGSAL</sequence>
<keyword id="KW-0249">Electron transport</keyword>
<keyword id="KW-0472">Membrane</keyword>
<keyword id="KW-0994">Organellar chromatophore</keyword>
<keyword id="KW-0602">Photosynthesis</keyword>
<keyword id="KW-0934">Plastid</keyword>
<keyword id="KW-0793">Thylakoid</keyword>
<keyword id="KW-0812">Transmembrane</keyword>
<keyword id="KW-1133">Transmembrane helix</keyword>
<keyword id="KW-0813">Transport</keyword>
<dbReference type="EMBL" id="CP000815">
    <property type="protein sequence ID" value="ACB43185.1"/>
    <property type="molecule type" value="Genomic_DNA"/>
</dbReference>
<dbReference type="RefSeq" id="YP_002049395.1">
    <property type="nucleotide sequence ID" value="NC_011087.1"/>
</dbReference>
<dbReference type="SMR" id="B1X5G6"/>
<dbReference type="GeneID" id="6481988"/>
<dbReference type="GO" id="GO:0009512">
    <property type="term" value="C:cytochrome b6f complex"/>
    <property type="evidence" value="ECO:0007669"/>
    <property type="project" value="InterPro"/>
</dbReference>
<dbReference type="GO" id="GO:0070118">
    <property type="term" value="C:organellar chromatophore thylakoid membrane"/>
    <property type="evidence" value="ECO:0007669"/>
    <property type="project" value="UniProtKB-SubCell"/>
</dbReference>
<dbReference type="GO" id="GO:0009536">
    <property type="term" value="C:plastid"/>
    <property type="evidence" value="ECO:0007669"/>
    <property type="project" value="UniProtKB-KW"/>
</dbReference>
<dbReference type="GO" id="GO:0045158">
    <property type="term" value="F:electron transporter, transferring electrons within cytochrome b6/f complex of photosystem II activity"/>
    <property type="evidence" value="ECO:0007669"/>
    <property type="project" value="UniProtKB-UniRule"/>
</dbReference>
<dbReference type="GO" id="GO:0017004">
    <property type="term" value="P:cytochrome complex assembly"/>
    <property type="evidence" value="ECO:0007669"/>
    <property type="project" value="UniProtKB-UniRule"/>
</dbReference>
<dbReference type="GO" id="GO:0015979">
    <property type="term" value="P:photosynthesis"/>
    <property type="evidence" value="ECO:0007669"/>
    <property type="project" value="UniProtKB-KW"/>
</dbReference>
<dbReference type="HAMAP" id="MF_00432">
    <property type="entry name" value="Cytb6_f_PetG"/>
    <property type="match status" value="1"/>
</dbReference>
<dbReference type="InterPro" id="IPR003683">
    <property type="entry name" value="Cyt_6/f_cplx_su5"/>
</dbReference>
<dbReference type="InterPro" id="IPR036099">
    <property type="entry name" value="Cyt_6/f_cplx_su5_sf"/>
</dbReference>
<dbReference type="NCBIfam" id="NF001907">
    <property type="entry name" value="PRK00665.1"/>
    <property type="match status" value="1"/>
</dbReference>
<dbReference type="Pfam" id="PF02529">
    <property type="entry name" value="PetG"/>
    <property type="match status" value="1"/>
</dbReference>
<dbReference type="PIRSF" id="PIRSF000034">
    <property type="entry name" value="Cyt_b6-f_V"/>
    <property type="match status" value="1"/>
</dbReference>
<dbReference type="SUPFAM" id="SSF103446">
    <property type="entry name" value="PetG subunit of the cytochrome b6f complex"/>
    <property type="match status" value="1"/>
</dbReference>
<proteinExistence type="inferred from homology"/>
<reference key="1">
    <citation type="journal article" date="2008" name="Curr. Biol.">
        <title>Chromatophore genome sequence of Paulinella sheds light on acquisition of photosynthesis by eukaryotes.</title>
        <authorList>
            <person name="Nowack E.C.M."/>
            <person name="Melkonian M."/>
            <person name="Gloeckner G."/>
        </authorList>
    </citation>
    <scope>NUCLEOTIDE SEQUENCE [LARGE SCALE GENOMIC DNA]</scope>
</reference>
<organism>
    <name type="scientific">Paulinella chromatophora</name>
    <dbReference type="NCBI Taxonomy" id="39717"/>
    <lineage>
        <taxon>Eukaryota</taxon>
        <taxon>Sar</taxon>
        <taxon>Rhizaria</taxon>
        <taxon>Cercozoa</taxon>
        <taxon>Imbricatea</taxon>
        <taxon>Silicofilosea</taxon>
        <taxon>Euglyphida</taxon>
        <taxon>Paulinellidae</taxon>
        <taxon>Paulinella</taxon>
    </lineage>
</organism>
<name>PETG_PAUCH</name>
<protein>
    <recommendedName>
        <fullName evidence="2">Cytochrome b6-f complex subunit 5</fullName>
    </recommendedName>
    <alternativeName>
        <fullName evidence="2">Cytochrome b6-f complex subunit PetG</fullName>
    </alternativeName>
    <alternativeName>
        <fullName evidence="2">Cytochrome b6-f complex subunit V</fullName>
    </alternativeName>
</protein>
<geneLocation type="organellar chromatophore"/>
<gene>
    <name evidence="2" type="primary">petG</name>
    <name type="ordered locus">PCC_0770</name>
</gene>
<accession>B1X5G6</accession>
<comment type="function">
    <text evidence="2">Component of the cytochrome b6-f complex, which mediates electron transfer between photosystem II (PSII) and photosystem I (PSI), cyclic electron flow around PSI, and state transitions. PetG is required for either the stability or assembly of the cytochrome b6-f complex.</text>
</comment>
<comment type="subunit">
    <text evidence="2">The 4 large subunits of the cytochrome b6-f complex are cytochrome b6, subunit IV (17 kDa polypeptide, PetD), cytochrome f and the Rieske protein, while the 4 small subunits are PetG, PetL, PetM and PetN. The complex functions as a dimer.</text>
</comment>
<comment type="subcellular location">
    <subcellularLocation>
        <location evidence="1">Plastid</location>
        <location evidence="1">Organellar chromatophore thylakoid membrane</location>
        <topology evidence="2">Single-pass membrane protein</topology>
    </subcellularLocation>
</comment>
<comment type="similarity">
    <text evidence="2">Belongs to the PetG family.</text>
</comment>
<evidence type="ECO:0000250" key="1"/>
<evidence type="ECO:0000255" key="2">
    <source>
        <dbReference type="HAMAP-Rule" id="MF_00432"/>
    </source>
</evidence>
<feature type="chain" id="PRO_0000355412" description="Cytochrome b6-f complex subunit 5">
    <location>
        <begin position="1"/>
        <end position="35"/>
    </location>
</feature>
<feature type="transmembrane region" description="Helical" evidence="2">
    <location>
        <begin position="5"/>
        <end position="25"/>
    </location>
</feature>